<evidence type="ECO:0000255" key="1">
    <source>
        <dbReference type="HAMAP-Rule" id="MF_00451"/>
    </source>
</evidence>
<proteinExistence type="inferred from homology"/>
<name>NDK_STRA3</name>
<sequence length="138" mass="15487">MEQTFFMIKPDGVKRGFIGEVISRIERRGFSIDRLEVRHADADILKRHYAELTDRPFFPTLVDYMTSGPVIIEVISGEEVISTWRTMMGSTNPKDALPGTIRGDFAQAPSPNQATCNIVHGSDSPESATREIAIWFNN</sequence>
<dbReference type="EC" id="2.7.4.6" evidence="1"/>
<dbReference type="EMBL" id="AL766848">
    <property type="protein sequence ID" value="CAD46575.1"/>
    <property type="molecule type" value="Genomic_DNA"/>
</dbReference>
<dbReference type="RefSeq" id="WP_000438311.1">
    <property type="nucleotide sequence ID" value="NC_004368.1"/>
</dbReference>
<dbReference type="SMR" id="Q8E5R4"/>
<dbReference type="KEGG" id="san:ndk"/>
<dbReference type="eggNOG" id="COG0105">
    <property type="taxonomic scope" value="Bacteria"/>
</dbReference>
<dbReference type="HOGENOM" id="CLU_060216_6_3_9"/>
<dbReference type="Proteomes" id="UP000000823">
    <property type="component" value="Chromosome"/>
</dbReference>
<dbReference type="GO" id="GO:0005737">
    <property type="term" value="C:cytoplasm"/>
    <property type="evidence" value="ECO:0007669"/>
    <property type="project" value="UniProtKB-SubCell"/>
</dbReference>
<dbReference type="GO" id="GO:0005524">
    <property type="term" value="F:ATP binding"/>
    <property type="evidence" value="ECO:0007669"/>
    <property type="project" value="UniProtKB-UniRule"/>
</dbReference>
<dbReference type="GO" id="GO:0046872">
    <property type="term" value="F:metal ion binding"/>
    <property type="evidence" value="ECO:0007669"/>
    <property type="project" value="UniProtKB-KW"/>
</dbReference>
<dbReference type="GO" id="GO:0004550">
    <property type="term" value="F:nucleoside diphosphate kinase activity"/>
    <property type="evidence" value="ECO:0007669"/>
    <property type="project" value="UniProtKB-UniRule"/>
</dbReference>
<dbReference type="GO" id="GO:0006241">
    <property type="term" value="P:CTP biosynthetic process"/>
    <property type="evidence" value="ECO:0007669"/>
    <property type="project" value="UniProtKB-UniRule"/>
</dbReference>
<dbReference type="GO" id="GO:0006183">
    <property type="term" value="P:GTP biosynthetic process"/>
    <property type="evidence" value="ECO:0007669"/>
    <property type="project" value="UniProtKB-UniRule"/>
</dbReference>
<dbReference type="GO" id="GO:0006228">
    <property type="term" value="P:UTP biosynthetic process"/>
    <property type="evidence" value="ECO:0007669"/>
    <property type="project" value="UniProtKB-UniRule"/>
</dbReference>
<dbReference type="CDD" id="cd04413">
    <property type="entry name" value="NDPk_I"/>
    <property type="match status" value="1"/>
</dbReference>
<dbReference type="FunFam" id="3.30.70.141:FF:000003">
    <property type="entry name" value="Nucleoside diphosphate kinase"/>
    <property type="match status" value="1"/>
</dbReference>
<dbReference type="Gene3D" id="3.30.70.141">
    <property type="entry name" value="Nucleoside diphosphate kinase-like domain"/>
    <property type="match status" value="1"/>
</dbReference>
<dbReference type="HAMAP" id="MF_00451">
    <property type="entry name" value="NDP_kinase"/>
    <property type="match status" value="1"/>
</dbReference>
<dbReference type="InterPro" id="IPR034907">
    <property type="entry name" value="NDK-like_dom"/>
</dbReference>
<dbReference type="InterPro" id="IPR036850">
    <property type="entry name" value="NDK-like_dom_sf"/>
</dbReference>
<dbReference type="InterPro" id="IPR001564">
    <property type="entry name" value="Nucleoside_diP_kinase"/>
</dbReference>
<dbReference type="InterPro" id="IPR023005">
    <property type="entry name" value="Nucleoside_diP_kinase_AS"/>
</dbReference>
<dbReference type="NCBIfam" id="NF001908">
    <property type="entry name" value="PRK00668.1"/>
    <property type="match status" value="1"/>
</dbReference>
<dbReference type="PANTHER" id="PTHR11349">
    <property type="entry name" value="NUCLEOSIDE DIPHOSPHATE KINASE"/>
    <property type="match status" value="1"/>
</dbReference>
<dbReference type="Pfam" id="PF00334">
    <property type="entry name" value="NDK"/>
    <property type="match status" value="1"/>
</dbReference>
<dbReference type="PRINTS" id="PR01243">
    <property type="entry name" value="NUCDPKINASE"/>
</dbReference>
<dbReference type="SMART" id="SM00562">
    <property type="entry name" value="NDK"/>
    <property type="match status" value="1"/>
</dbReference>
<dbReference type="SUPFAM" id="SSF54919">
    <property type="entry name" value="Nucleoside diphosphate kinase, NDK"/>
    <property type="match status" value="1"/>
</dbReference>
<dbReference type="PROSITE" id="PS00469">
    <property type="entry name" value="NDPK"/>
    <property type="match status" value="1"/>
</dbReference>
<dbReference type="PROSITE" id="PS51374">
    <property type="entry name" value="NDPK_LIKE"/>
    <property type="match status" value="1"/>
</dbReference>
<reference key="1">
    <citation type="journal article" date="2002" name="Mol. Microbiol.">
        <title>Genome sequence of Streptococcus agalactiae, a pathogen causing invasive neonatal disease.</title>
        <authorList>
            <person name="Glaser P."/>
            <person name="Rusniok C."/>
            <person name="Buchrieser C."/>
            <person name="Chevalier F."/>
            <person name="Frangeul L."/>
            <person name="Msadek T."/>
            <person name="Zouine M."/>
            <person name="Couve E."/>
            <person name="Lalioui L."/>
            <person name="Poyart C."/>
            <person name="Trieu-Cuot P."/>
            <person name="Kunst F."/>
        </authorList>
    </citation>
    <scope>NUCLEOTIDE SEQUENCE [LARGE SCALE GENOMIC DNA]</scope>
    <source>
        <strain>NEM316</strain>
    </source>
</reference>
<gene>
    <name evidence="1" type="primary">ndk</name>
    <name type="ordered locus">gbs0916</name>
</gene>
<accession>Q8E5R4</accession>
<keyword id="KW-0067">ATP-binding</keyword>
<keyword id="KW-0963">Cytoplasm</keyword>
<keyword id="KW-0418">Kinase</keyword>
<keyword id="KW-0460">Magnesium</keyword>
<keyword id="KW-0479">Metal-binding</keyword>
<keyword id="KW-0546">Nucleotide metabolism</keyword>
<keyword id="KW-0547">Nucleotide-binding</keyword>
<keyword id="KW-0597">Phosphoprotein</keyword>
<keyword id="KW-0808">Transferase</keyword>
<comment type="function">
    <text evidence="1">Major role in the synthesis of nucleoside triphosphates other than ATP. The ATP gamma phosphate is transferred to the NDP beta phosphate via a ping-pong mechanism, using a phosphorylated active-site intermediate.</text>
</comment>
<comment type="catalytic activity">
    <reaction evidence="1">
        <text>a 2'-deoxyribonucleoside 5'-diphosphate + ATP = a 2'-deoxyribonucleoside 5'-triphosphate + ADP</text>
        <dbReference type="Rhea" id="RHEA:44640"/>
        <dbReference type="ChEBI" id="CHEBI:30616"/>
        <dbReference type="ChEBI" id="CHEBI:61560"/>
        <dbReference type="ChEBI" id="CHEBI:73316"/>
        <dbReference type="ChEBI" id="CHEBI:456216"/>
        <dbReference type="EC" id="2.7.4.6"/>
    </reaction>
</comment>
<comment type="catalytic activity">
    <reaction evidence="1">
        <text>a ribonucleoside 5'-diphosphate + ATP = a ribonucleoside 5'-triphosphate + ADP</text>
        <dbReference type="Rhea" id="RHEA:18113"/>
        <dbReference type="ChEBI" id="CHEBI:30616"/>
        <dbReference type="ChEBI" id="CHEBI:57930"/>
        <dbReference type="ChEBI" id="CHEBI:61557"/>
        <dbReference type="ChEBI" id="CHEBI:456216"/>
        <dbReference type="EC" id="2.7.4.6"/>
    </reaction>
</comment>
<comment type="cofactor">
    <cofactor evidence="1">
        <name>Mg(2+)</name>
        <dbReference type="ChEBI" id="CHEBI:18420"/>
    </cofactor>
</comment>
<comment type="subunit">
    <text evidence="1">Homotetramer.</text>
</comment>
<comment type="subcellular location">
    <subcellularLocation>
        <location evidence="1">Cytoplasm</location>
    </subcellularLocation>
</comment>
<comment type="similarity">
    <text evidence="1">Belongs to the NDK family.</text>
</comment>
<protein>
    <recommendedName>
        <fullName evidence="1">Nucleoside diphosphate kinase</fullName>
        <shortName evidence="1">NDK</shortName>
        <shortName evidence="1">NDP kinase</shortName>
        <ecNumber evidence="1">2.7.4.6</ecNumber>
    </recommendedName>
    <alternativeName>
        <fullName evidence="1">Nucleoside-2-P kinase</fullName>
    </alternativeName>
</protein>
<feature type="chain" id="PRO_0000137053" description="Nucleoside diphosphate kinase">
    <location>
        <begin position="1"/>
        <end position="138"/>
    </location>
</feature>
<feature type="active site" description="Pros-phosphohistidine intermediate" evidence="1">
    <location>
        <position position="120"/>
    </location>
</feature>
<feature type="binding site" evidence="1">
    <location>
        <position position="9"/>
    </location>
    <ligand>
        <name>ATP</name>
        <dbReference type="ChEBI" id="CHEBI:30616"/>
    </ligand>
</feature>
<feature type="binding site" evidence="1">
    <location>
        <position position="57"/>
    </location>
    <ligand>
        <name>ATP</name>
        <dbReference type="ChEBI" id="CHEBI:30616"/>
    </ligand>
</feature>
<feature type="binding site" evidence="1">
    <location>
        <position position="85"/>
    </location>
    <ligand>
        <name>ATP</name>
        <dbReference type="ChEBI" id="CHEBI:30616"/>
    </ligand>
</feature>
<feature type="binding site" evidence="1">
    <location>
        <position position="91"/>
    </location>
    <ligand>
        <name>ATP</name>
        <dbReference type="ChEBI" id="CHEBI:30616"/>
    </ligand>
</feature>
<feature type="binding site" evidence="1">
    <location>
        <position position="102"/>
    </location>
    <ligand>
        <name>ATP</name>
        <dbReference type="ChEBI" id="CHEBI:30616"/>
    </ligand>
</feature>
<feature type="binding site" evidence="1">
    <location>
        <position position="112"/>
    </location>
    <ligand>
        <name>ATP</name>
        <dbReference type="ChEBI" id="CHEBI:30616"/>
    </ligand>
</feature>
<organism>
    <name type="scientific">Streptococcus agalactiae serotype III (strain NEM316)</name>
    <dbReference type="NCBI Taxonomy" id="211110"/>
    <lineage>
        <taxon>Bacteria</taxon>
        <taxon>Bacillati</taxon>
        <taxon>Bacillota</taxon>
        <taxon>Bacilli</taxon>
        <taxon>Lactobacillales</taxon>
        <taxon>Streptococcaceae</taxon>
        <taxon>Streptococcus</taxon>
    </lineage>
</organism>